<feature type="chain" id="PRO_0000249175" description="Proline--tRNA ligase">
    <location>
        <begin position="1"/>
        <end position="483"/>
    </location>
</feature>
<keyword id="KW-0030">Aminoacyl-tRNA synthetase</keyword>
<keyword id="KW-0067">ATP-binding</keyword>
<keyword id="KW-0963">Cytoplasm</keyword>
<keyword id="KW-0436">Ligase</keyword>
<keyword id="KW-0547">Nucleotide-binding</keyword>
<keyword id="KW-0648">Protein biosynthesis</keyword>
<keyword id="KW-1185">Reference proteome</keyword>
<sequence length="483" mass="55821">MKVSKEKWEKNFSEWLDWVLREAEIYDYGRYPVKGMGVWMPYGFKIRQNVLQLIRKLLDETGHEEVLFPLLIPEDLLKKESEHIRGFEEEVYWVTKGGSQDLDVKLALRPTSETSITFMESFWVKSYKQLPKKYYQIVSVFRYETKATRPMMRLREITTFKEAHTLHETYEDAARQVDEAINIYKAFFDELGIPYMISKRPEWDKFAGAEYTIAFDTILPDSRVLQIGTVHHLGQHFTKAFDFKIQRKDGSLDYPHQTSYGISDRVIAVLIAINGDDHGPVLNPVIAPIKVVIVPIPAKDEETTAKIINYAKEVGENLKNRGITVVIDDDKEKTPGEKFYIWELKGVPLRIEIGPKELNNNTVYIKRRDTFEGKSVPKDKAVEEVNTLLEKIKNDLHEKALKFLKERIIYTEDLNEAKKILEERAGVVEVPWCGDNNCGLQLQDVTNARVLGIPLDEDKDVSNAKCVMCKKPAKSLLRLAKTY</sequence>
<accession>Q971B5</accession>
<accession>F9VND1</accession>
<dbReference type="EC" id="6.1.1.15" evidence="1"/>
<dbReference type="EMBL" id="BA000023">
    <property type="protein sequence ID" value="BAK54577.1"/>
    <property type="molecule type" value="Genomic_DNA"/>
</dbReference>
<dbReference type="RefSeq" id="WP_010979486.1">
    <property type="nucleotide sequence ID" value="NC_003106.2"/>
</dbReference>
<dbReference type="SMR" id="Q971B5"/>
<dbReference type="STRING" id="273063.STK_14400"/>
<dbReference type="GeneID" id="1459472"/>
<dbReference type="KEGG" id="sto:STK_14400"/>
<dbReference type="PATRIC" id="fig|273063.9.peg.1641"/>
<dbReference type="eggNOG" id="arCOG00402">
    <property type="taxonomic scope" value="Archaea"/>
</dbReference>
<dbReference type="OrthoDB" id="7375at2157"/>
<dbReference type="Proteomes" id="UP000001015">
    <property type="component" value="Chromosome"/>
</dbReference>
<dbReference type="GO" id="GO:0017101">
    <property type="term" value="C:aminoacyl-tRNA synthetase multienzyme complex"/>
    <property type="evidence" value="ECO:0007669"/>
    <property type="project" value="TreeGrafter"/>
</dbReference>
<dbReference type="GO" id="GO:0005737">
    <property type="term" value="C:cytoplasm"/>
    <property type="evidence" value="ECO:0007669"/>
    <property type="project" value="UniProtKB-SubCell"/>
</dbReference>
<dbReference type="GO" id="GO:0005524">
    <property type="term" value="F:ATP binding"/>
    <property type="evidence" value="ECO:0007669"/>
    <property type="project" value="UniProtKB-UniRule"/>
</dbReference>
<dbReference type="GO" id="GO:0004827">
    <property type="term" value="F:proline-tRNA ligase activity"/>
    <property type="evidence" value="ECO:0007669"/>
    <property type="project" value="UniProtKB-UniRule"/>
</dbReference>
<dbReference type="GO" id="GO:0006433">
    <property type="term" value="P:prolyl-tRNA aminoacylation"/>
    <property type="evidence" value="ECO:0007669"/>
    <property type="project" value="UniProtKB-UniRule"/>
</dbReference>
<dbReference type="CDD" id="cd00862">
    <property type="entry name" value="ProRS_anticodon_zinc"/>
    <property type="match status" value="1"/>
</dbReference>
<dbReference type="CDD" id="cd00778">
    <property type="entry name" value="ProRS_core_arch_euk"/>
    <property type="match status" value="1"/>
</dbReference>
<dbReference type="FunFam" id="3.40.50.800:FF:000005">
    <property type="entry name" value="bifunctional glutamate/proline--tRNA ligase"/>
    <property type="match status" value="1"/>
</dbReference>
<dbReference type="FunFam" id="3.30.930.10:FF:000037">
    <property type="entry name" value="Proline--tRNA ligase"/>
    <property type="match status" value="1"/>
</dbReference>
<dbReference type="Gene3D" id="3.40.50.800">
    <property type="entry name" value="Anticodon-binding domain"/>
    <property type="match status" value="1"/>
</dbReference>
<dbReference type="Gene3D" id="3.30.930.10">
    <property type="entry name" value="Bira Bifunctional Protein, Domain 2"/>
    <property type="match status" value="1"/>
</dbReference>
<dbReference type="Gene3D" id="3.30.110.30">
    <property type="entry name" value="C-terminal domain of ProRS"/>
    <property type="match status" value="1"/>
</dbReference>
<dbReference type="HAMAP" id="MF_01571">
    <property type="entry name" value="Pro_tRNA_synth_type3"/>
    <property type="match status" value="1"/>
</dbReference>
<dbReference type="InterPro" id="IPR002314">
    <property type="entry name" value="aa-tRNA-synt_IIb"/>
</dbReference>
<dbReference type="InterPro" id="IPR006195">
    <property type="entry name" value="aa-tRNA-synth_II"/>
</dbReference>
<dbReference type="InterPro" id="IPR045864">
    <property type="entry name" value="aa-tRNA-synth_II/BPL/LPL"/>
</dbReference>
<dbReference type="InterPro" id="IPR004154">
    <property type="entry name" value="Anticodon-bd"/>
</dbReference>
<dbReference type="InterPro" id="IPR036621">
    <property type="entry name" value="Anticodon-bd_dom_sf"/>
</dbReference>
<dbReference type="InterPro" id="IPR002316">
    <property type="entry name" value="Pro-tRNA-ligase_IIa"/>
</dbReference>
<dbReference type="InterPro" id="IPR004499">
    <property type="entry name" value="Pro-tRNA-ligase_IIa_arc-type"/>
</dbReference>
<dbReference type="InterPro" id="IPR016061">
    <property type="entry name" value="Pro-tRNA_ligase_II_C"/>
</dbReference>
<dbReference type="InterPro" id="IPR017449">
    <property type="entry name" value="Pro-tRNA_synth_II"/>
</dbReference>
<dbReference type="InterPro" id="IPR033721">
    <property type="entry name" value="ProRS_core_arch_euk"/>
</dbReference>
<dbReference type="NCBIfam" id="TIGR00408">
    <property type="entry name" value="proS_fam_I"/>
    <property type="match status" value="1"/>
</dbReference>
<dbReference type="PANTHER" id="PTHR43382:SF2">
    <property type="entry name" value="BIFUNCTIONAL GLUTAMATE_PROLINE--TRNA LIGASE"/>
    <property type="match status" value="1"/>
</dbReference>
<dbReference type="PANTHER" id="PTHR43382">
    <property type="entry name" value="PROLYL-TRNA SYNTHETASE"/>
    <property type="match status" value="1"/>
</dbReference>
<dbReference type="Pfam" id="PF03129">
    <property type="entry name" value="HGTP_anticodon"/>
    <property type="match status" value="1"/>
</dbReference>
<dbReference type="Pfam" id="PF09180">
    <property type="entry name" value="ProRS-C_1"/>
    <property type="match status" value="1"/>
</dbReference>
<dbReference type="Pfam" id="PF00587">
    <property type="entry name" value="tRNA-synt_2b"/>
    <property type="match status" value="1"/>
</dbReference>
<dbReference type="PRINTS" id="PR01046">
    <property type="entry name" value="TRNASYNTHPRO"/>
</dbReference>
<dbReference type="SMART" id="SM00946">
    <property type="entry name" value="ProRS-C_1"/>
    <property type="match status" value="1"/>
</dbReference>
<dbReference type="SUPFAM" id="SSF64586">
    <property type="entry name" value="C-terminal domain of ProRS"/>
    <property type="match status" value="1"/>
</dbReference>
<dbReference type="SUPFAM" id="SSF52954">
    <property type="entry name" value="Class II aaRS ABD-related"/>
    <property type="match status" value="1"/>
</dbReference>
<dbReference type="SUPFAM" id="SSF55681">
    <property type="entry name" value="Class II aaRS and biotin synthetases"/>
    <property type="match status" value="1"/>
</dbReference>
<dbReference type="PROSITE" id="PS50862">
    <property type="entry name" value="AA_TRNA_LIGASE_II"/>
    <property type="match status" value="1"/>
</dbReference>
<organism>
    <name type="scientific">Sulfurisphaera tokodaii (strain DSM 16993 / JCM 10545 / NBRC 100140 / 7)</name>
    <name type="common">Sulfolobus tokodaii</name>
    <dbReference type="NCBI Taxonomy" id="273063"/>
    <lineage>
        <taxon>Archaea</taxon>
        <taxon>Thermoproteota</taxon>
        <taxon>Thermoprotei</taxon>
        <taxon>Sulfolobales</taxon>
        <taxon>Sulfolobaceae</taxon>
        <taxon>Sulfurisphaera</taxon>
    </lineage>
</organism>
<reference key="1">
    <citation type="journal article" date="2001" name="DNA Res.">
        <title>Complete genome sequence of an aerobic thermoacidophilic Crenarchaeon, Sulfolobus tokodaii strain7.</title>
        <authorList>
            <person name="Kawarabayasi Y."/>
            <person name="Hino Y."/>
            <person name="Horikawa H."/>
            <person name="Jin-no K."/>
            <person name="Takahashi M."/>
            <person name="Sekine M."/>
            <person name="Baba S."/>
            <person name="Ankai A."/>
            <person name="Kosugi H."/>
            <person name="Hosoyama A."/>
            <person name="Fukui S."/>
            <person name="Nagai Y."/>
            <person name="Nishijima K."/>
            <person name="Otsuka R."/>
            <person name="Nakazawa H."/>
            <person name="Takamiya M."/>
            <person name="Kato Y."/>
            <person name="Yoshizawa T."/>
            <person name="Tanaka T."/>
            <person name="Kudoh Y."/>
            <person name="Yamazaki J."/>
            <person name="Kushida N."/>
            <person name="Oguchi A."/>
            <person name="Aoki K."/>
            <person name="Masuda S."/>
            <person name="Yanagii M."/>
            <person name="Nishimura M."/>
            <person name="Yamagishi A."/>
            <person name="Oshima T."/>
            <person name="Kikuchi H."/>
        </authorList>
    </citation>
    <scope>NUCLEOTIDE SEQUENCE [LARGE SCALE GENOMIC DNA]</scope>
    <source>
        <strain>DSM 16993 / JCM 10545 / NBRC 100140 / 7</strain>
    </source>
</reference>
<name>SYP_SULTO</name>
<gene>
    <name evidence="1" type="primary">proS</name>
    <name type="ordered locus">STK_14400</name>
</gene>
<comment type="function">
    <text evidence="1">Catalyzes the attachment of proline to tRNA(Pro) in a two-step reaction: proline is first activated by ATP to form Pro-AMP and then transferred to the acceptor end of tRNA(Pro).</text>
</comment>
<comment type="catalytic activity">
    <reaction evidence="1">
        <text>tRNA(Pro) + L-proline + ATP = L-prolyl-tRNA(Pro) + AMP + diphosphate</text>
        <dbReference type="Rhea" id="RHEA:14305"/>
        <dbReference type="Rhea" id="RHEA-COMP:9700"/>
        <dbReference type="Rhea" id="RHEA-COMP:9702"/>
        <dbReference type="ChEBI" id="CHEBI:30616"/>
        <dbReference type="ChEBI" id="CHEBI:33019"/>
        <dbReference type="ChEBI" id="CHEBI:60039"/>
        <dbReference type="ChEBI" id="CHEBI:78442"/>
        <dbReference type="ChEBI" id="CHEBI:78532"/>
        <dbReference type="ChEBI" id="CHEBI:456215"/>
        <dbReference type="EC" id="6.1.1.15"/>
    </reaction>
</comment>
<comment type="subunit">
    <text evidence="1">Homodimer.</text>
</comment>
<comment type="subcellular location">
    <subcellularLocation>
        <location evidence="1">Cytoplasm</location>
    </subcellularLocation>
</comment>
<comment type="domain">
    <text evidence="1">Consists of three domains: the N-terminal catalytic domain, the anticodon-binding domain and the C-terminal extension.</text>
</comment>
<comment type="similarity">
    <text evidence="1">Belongs to the class-II aminoacyl-tRNA synthetase family. ProS type 3 subfamily.</text>
</comment>
<evidence type="ECO:0000255" key="1">
    <source>
        <dbReference type="HAMAP-Rule" id="MF_01571"/>
    </source>
</evidence>
<protein>
    <recommendedName>
        <fullName evidence="1">Proline--tRNA ligase</fullName>
        <ecNumber evidence="1">6.1.1.15</ecNumber>
    </recommendedName>
    <alternativeName>
        <fullName evidence="1">Prolyl-tRNA synthetase</fullName>
        <shortName evidence="1">ProRS</shortName>
    </alternativeName>
</protein>
<proteinExistence type="inferred from homology"/>